<accession>Q8KG23</accession>
<comment type="function">
    <text evidence="1">Converts 2C-methyl-D-erythritol 2,4-cyclodiphosphate (ME-2,4cPP) into 1-hydroxy-2-methyl-2-(E)-butenyl 4-diphosphate.</text>
</comment>
<comment type="catalytic activity">
    <reaction evidence="1">
        <text>(2E)-4-hydroxy-3-methylbut-2-enyl diphosphate + oxidized [flavodoxin] + H2O + 2 H(+) = 2-C-methyl-D-erythritol 2,4-cyclic diphosphate + reduced [flavodoxin]</text>
        <dbReference type="Rhea" id="RHEA:43604"/>
        <dbReference type="Rhea" id="RHEA-COMP:10622"/>
        <dbReference type="Rhea" id="RHEA-COMP:10623"/>
        <dbReference type="ChEBI" id="CHEBI:15377"/>
        <dbReference type="ChEBI" id="CHEBI:15378"/>
        <dbReference type="ChEBI" id="CHEBI:57618"/>
        <dbReference type="ChEBI" id="CHEBI:58210"/>
        <dbReference type="ChEBI" id="CHEBI:58483"/>
        <dbReference type="ChEBI" id="CHEBI:128753"/>
        <dbReference type="EC" id="1.17.7.3"/>
    </reaction>
</comment>
<comment type="cofactor">
    <cofactor evidence="1">
        <name>[4Fe-4S] cluster</name>
        <dbReference type="ChEBI" id="CHEBI:49883"/>
    </cofactor>
    <text evidence="1">Binds 1 [4Fe-4S] cluster.</text>
</comment>
<comment type="pathway">
    <text evidence="1">Isoprenoid biosynthesis; isopentenyl diphosphate biosynthesis via DXP pathway; isopentenyl diphosphate from 1-deoxy-D-xylulose 5-phosphate: step 5/6.</text>
</comment>
<comment type="similarity">
    <text evidence="1">Belongs to the IspG family.</text>
</comment>
<evidence type="ECO:0000255" key="1">
    <source>
        <dbReference type="HAMAP-Rule" id="MF_00159"/>
    </source>
</evidence>
<reference key="1">
    <citation type="journal article" date="2002" name="Proc. Natl. Acad. Sci. U.S.A.">
        <title>The complete genome sequence of Chlorobium tepidum TLS, a photosynthetic, anaerobic, green-sulfur bacterium.</title>
        <authorList>
            <person name="Eisen J.A."/>
            <person name="Nelson K.E."/>
            <person name="Paulsen I.T."/>
            <person name="Heidelberg J.F."/>
            <person name="Wu M."/>
            <person name="Dodson R.J."/>
            <person name="DeBoy R.T."/>
            <person name="Gwinn M.L."/>
            <person name="Nelson W.C."/>
            <person name="Haft D.H."/>
            <person name="Hickey E.K."/>
            <person name="Peterson J.D."/>
            <person name="Durkin A.S."/>
            <person name="Kolonay J.F."/>
            <person name="Yang F."/>
            <person name="Holt I.E."/>
            <person name="Umayam L.A."/>
            <person name="Mason T.M."/>
            <person name="Brenner M."/>
            <person name="Shea T.P."/>
            <person name="Parksey D.S."/>
            <person name="Nierman W.C."/>
            <person name="Feldblyum T.V."/>
            <person name="Hansen C.L."/>
            <person name="Craven M.B."/>
            <person name="Radune D."/>
            <person name="Vamathevan J.J."/>
            <person name="Khouri H.M."/>
            <person name="White O."/>
            <person name="Gruber T.M."/>
            <person name="Ketchum K.A."/>
            <person name="Venter J.C."/>
            <person name="Tettelin H."/>
            <person name="Bryant D.A."/>
            <person name="Fraser C.M."/>
        </authorList>
    </citation>
    <scope>NUCLEOTIDE SEQUENCE [LARGE SCALE GENOMIC DNA]</scope>
    <source>
        <strain>ATCC 49652 / DSM 12025 / NBRC 103806 / TLS</strain>
    </source>
</reference>
<keyword id="KW-0004">4Fe-4S</keyword>
<keyword id="KW-0408">Iron</keyword>
<keyword id="KW-0411">Iron-sulfur</keyword>
<keyword id="KW-0414">Isoprene biosynthesis</keyword>
<keyword id="KW-0479">Metal-binding</keyword>
<keyword id="KW-0560">Oxidoreductase</keyword>
<keyword id="KW-1185">Reference proteome</keyword>
<organism>
    <name type="scientific">Chlorobaculum tepidum (strain ATCC 49652 / DSM 12025 / NBRC 103806 / TLS)</name>
    <name type="common">Chlorobium tepidum</name>
    <dbReference type="NCBI Taxonomy" id="194439"/>
    <lineage>
        <taxon>Bacteria</taxon>
        <taxon>Pseudomonadati</taxon>
        <taxon>Chlorobiota</taxon>
        <taxon>Chlorobiia</taxon>
        <taxon>Chlorobiales</taxon>
        <taxon>Chlorobiaceae</taxon>
        <taxon>Chlorobaculum</taxon>
    </lineage>
</organism>
<feature type="chain" id="PRO_0000190560" description="4-hydroxy-3-methylbut-2-en-1-yl diphosphate synthase (flavodoxin)">
    <location>
        <begin position="1"/>
        <end position="746"/>
    </location>
</feature>
<feature type="binding site" evidence="1">
    <location>
        <position position="653"/>
    </location>
    <ligand>
        <name>[4Fe-4S] cluster</name>
        <dbReference type="ChEBI" id="CHEBI:49883"/>
    </ligand>
</feature>
<feature type="binding site" evidence="1">
    <location>
        <position position="656"/>
    </location>
    <ligand>
        <name>[4Fe-4S] cluster</name>
        <dbReference type="ChEBI" id="CHEBI:49883"/>
    </ligand>
</feature>
<feature type="binding site" evidence="1">
    <location>
        <position position="687"/>
    </location>
    <ligand>
        <name>[4Fe-4S] cluster</name>
        <dbReference type="ChEBI" id="CHEBI:49883"/>
    </ligand>
</feature>
<feature type="binding site" evidence="1">
    <location>
        <position position="694"/>
    </location>
    <ligand>
        <name>[4Fe-4S] cluster</name>
        <dbReference type="ChEBI" id="CHEBI:49883"/>
    </ligand>
</feature>
<gene>
    <name evidence="1" type="primary">ispG</name>
    <name type="synonym">gcpE</name>
    <name type="ordered locus">CT0147</name>
</gene>
<sequence>MVNSKASSFRFSFFIHNSAFIILFPPSFSRLLFIPAIGYLQDHLQSLSTSRLMSEERLVSGNIIDYPAPVYSYRRRVTREVPFGTIFLGGYLPIRVESMITAHTMDTAASVEQCRRLYEAGCEIIRLTVPTEKDAENLKNIREQLRRDGIDTPLVADIHFSAKAAMKAVEFVENIRINPGNYATGAKFSSKDYTDDEYRAELDKVREEFTPLVRKARSLGVSMRIGTNHGSLSDRIVSRYGNSPEGMVEAALEFSRICEDEGYYDQLFSMKSSNVRVMIQAYRLLVARADAELRYAYPLHLGVTEAGDGDEGRIKSAMGIGALLEDGLGDTIRVSLTEDPVNEVPVGFAIVKKYNDMLLVRGDRAHLPVKHVIEHERKSAGHVQLPFEPFSYSRRPSISIDGAGIPVGGDALPGVETAAHAPITDTESLRDEILARLDPGKPEDAIRSELVSVGVGSAEDISLLKALLDSLGNLREKIVVSTADTSIVPALLPLCGRVRLDIVEGETLGTGLIESLHDRNAAIEFCFIHEKSSENVPAEVLVRLAAKLKARGLQRVMLSIVSDAPLYSTRKLALELKKAGLDYPIAVRYRRLDGERSGVLIQSAIQAGTLFCDGIGDLIALETNMPASEEVSLCFNILQAARIRMSKTEFISCPGCGRTYFELEKTTALIKQRVSHLKGLKIGIMGCIVNGPGEMADADFGYVGSGKGRVSLYVGKECVEENIPEAEALERLIELIRQNGKWVDPV</sequence>
<name>ISPG_CHLTE</name>
<protein>
    <recommendedName>
        <fullName evidence="1">4-hydroxy-3-methylbut-2-en-1-yl diphosphate synthase (flavodoxin)</fullName>
        <ecNumber evidence="1">1.17.7.3</ecNumber>
    </recommendedName>
    <alternativeName>
        <fullName evidence="1">1-hydroxy-2-methyl-2-(E)-butenyl 4-diphosphate synthase</fullName>
    </alternativeName>
</protein>
<dbReference type="EC" id="1.17.7.3" evidence="1"/>
<dbReference type="EMBL" id="AE006470">
    <property type="protein sequence ID" value="AAM71395.1"/>
    <property type="molecule type" value="Genomic_DNA"/>
</dbReference>
<dbReference type="RefSeq" id="NP_661053.1">
    <property type="nucleotide sequence ID" value="NC_002932.3"/>
</dbReference>
<dbReference type="SMR" id="Q8KG23"/>
<dbReference type="STRING" id="194439.CT0147"/>
<dbReference type="EnsemblBacteria" id="AAM71395">
    <property type="protein sequence ID" value="AAM71395"/>
    <property type="gene ID" value="CT0147"/>
</dbReference>
<dbReference type="KEGG" id="cte:CT0147"/>
<dbReference type="PATRIC" id="fig|194439.7.peg.144"/>
<dbReference type="eggNOG" id="COG0821">
    <property type="taxonomic scope" value="Bacteria"/>
</dbReference>
<dbReference type="HOGENOM" id="CLU_012689_0_0_10"/>
<dbReference type="OrthoDB" id="9803214at2"/>
<dbReference type="UniPathway" id="UPA00056">
    <property type="reaction ID" value="UER00096"/>
</dbReference>
<dbReference type="Proteomes" id="UP000001007">
    <property type="component" value="Chromosome"/>
</dbReference>
<dbReference type="GO" id="GO:0051539">
    <property type="term" value="F:4 iron, 4 sulfur cluster binding"/>
    <property type="evidence" value="ECO:0007669"/>
    <property type="project" value="UniProtKB-UniRule"/>
</dbReference>
<dbReference type="GO" id="GO:0046429">
    <property type="term" value="F:4-hydroxy-3-methylbut-2-en-1-yl diphosphate synthase activity (ferredoxin)"/>
    <property type="evidence" value="ECO:0007669"/>
    <property type="project" value="UniProtKB-UniRule"/>
</dbReference>
<dbReference type="GO" id="GO:0141197">
    <property type="term" value="F:4-hydroxy-3-methylbut-2-enyl-diphosphate synthase activity (flavodoxin)"/>
    <property type="evidence" value="ECO:0007669"/>
    <property type="project" value="UniProtKB-EC"/>
</dbReference>
<dbReference type="GO" id="GO:0005506">
    <property type="term" value="F:iron ion binding"/>
    <property type="evidence" value="ECO:0007669"/>
    <property type="project" value="InterPro"/>
</dbReference>
<dbReference type="GO" id="GO:0019288">
    <property type="term" value="P:isopentenyl diphosphate biosynthetic process, methylerythritol 4-phosphate pathway"/>
    <property type="evidence" value="ECO:0007669"/>
    <property type="project" value="UniProtKB-UniRule"/>
</dbReference>
<dbReference type="GO" id="GO:0016114">
    <property type="term" value="P:terpenoid biosynthetic process"/>
    <property type="evidence" value="ECO:0007669"/>
    <property type="project" value="InterPro"/>
</dbReference>
<dbReference type="Gene3D" id="3.20.20.20">
    <property type="entry name" value="Dihydropteroate synthase-like"/>
    <property type="match status" value="2"/>
</dbReference>
<dbReference type="Gene3D" id="3.30.413.10">
    <property type="entry name" value="Sulfite Reductase Hemoprotein, domain 1"/>
    <property type="match status" value="1"/>
</dbReference>
<dbReference type="HAMAP" id="MF_00159">
    <property type="entry name" value="IspG"/>
    <property type="match status" value="1"/>
</dbReference>
<dbReference type="InterPro" id="IPR011005">
    <property type="entry name" value="Dihydropteroate_synth-like_sf"/>
</dbReference>
<dbReference type="InterPro" id="IPR017178">
    <property type="entry name" value="IspG_atypical"/>
</dbReference>
<dbReference type="InterPro" id="IPR004588">
    <property type="entry name" value="IspG_bac-typ"/>
</dbReference>
<dbReference type="InterPro" id="IPR045854">
    <property type="entry name" value="NO2/SO3_Rdtase_4Fe4S_sf"/>
</dbReference>
<dbReference type="NCBIfam" id="TIGR00612">
    <property type="entry name" value="ispG_gcpE"/>
    <property type="match status" value="1"/>
</dbReference>
<dbReference type="PANTHER" id="PTHR30454">
    <property type="entry name" value="4-HYDROXY-3-METHYLBUT-2-EN-1-YL DIPHOSPHATE SYNTHASE"/>
    <property type="match status" value="1"/>
</dbReference>
<dbReference type="PANTHER" id="PTHR30454:SF0">
    <property type="entry name" value="4-HYDROXY-3-METHYLBUT-2-EN-1-YL DIPHOSPHATE SYNTHASE (FERREDOXIN), CHLOROPLASTIC"/>
    <property type="match status" value="1"/>
</dbReference>
<dbReference type="Pfam" id="PF04551">
    <property type="entry name" value="GcpE"/>
    <property type="match status" value="2"/>
</dbReference>
<dbReference type="PIRSF" id="PIRSF037336">
    <property type="entry name" value="IspG_like"/>
    <property type="match status" value="1"/>
</dbReference>
<dbReference type="SUPFAM" id="SSF56014">
    <property type="entry name" value="Nitrite and sulphite reductase 4Fe-4S domain-like"/>
    <property type="match status" value="1"/>
</dbReference>
<proteinExistence type="inferred from homology"/>